<feature type="chain" id="PRO_0000460021" description="Cyclic GMP-AMP synthase-like receptor">
    <location>
        <begin position="1"/>
        <end position="520"/>
    </location>
</feature>
<feature type="binding site" evidence="2">
    <location>
        <position position="68"/>
    </location>
    <ligand>
        <name>ATP</name>
        <dbReference type="ChEBI" id="CHEBI:30616"/>
    </ligand>
</feature>
<feature type="binding site" evidence="2">
    <location>
        <begin position="80"/>
        <end position="82"/>
    </location>
    <ligand>
        <name>ATP</name>
        <dbReference type="ChEBI" id="CHEBI:30616"/>
    </ligand>
</feature>
<feature type="binding site" evidence="2">
    <location>
        <position position="80"/>
    </location>
    <ligand>
        <name>Mg(2+)</name>
        <dbReference type="ChEBI" id="CHEBI:18420"/>
        <note>catalytic</note>
    </ligand>
</feature>
<feature type="binding site" evidence="2">
    <location>
        <position position="82"/>
    </location>
    <ligand>
        <name>Mg(2+)</name>
        <dbReference type="ChEBI" id="CHEBI:18420"/>
        <note>catalytic</note>
    </ligand>
</feature>
<feature type="binding site" evidence="2">
    <location>
        <position position="198"/>
    </location>
    <ligand>
        <name>GTP</name>
        <dbReference type="ChEBI" id="CHEBI:37565"/>
    </ligand>
</feature>
<feature type="binding site" evidence="2">
    <location>
        <position position="198"/>
    </location>
    <ligand>
        <name>Mg(2+)</name>
        <dbReference type="ChEBI" id="CHEBI:18420"/>
        <note>catalytic</note>
    </ligand>
</feature>
<feature type="binding site" evidence="2">
    <location>
        <position position="264"/>
    </location>
    <ligand>
        <name>ATP</name>
        <dbReference type="ChEBI" id="CHEBI:30616"/>
    </ligand>
</feature>
<feature type="binding site" evidence="1">
    <location>
        <position position="288"/>
    </location>
    <ligand>
        <name>Mn(2+)</name>
        <dbReference type="ChEBI" id="CHEBI:29035"/>
    </ligand>
</feature>
<feature type="binding site" evidence="1">
    <location>
        <position position="294"/>
    </location>
    <ligand>
        <name>Mn(2+)</name>
        <dbReference type="ChEBI" id="CHEBI:29035"/>
    </ligand>
</feature>
<sequence length="520" mass="60675">MNGDEQNKKKLRSDAMFGKINQFVTLQKDETAKYNSLFTKVTESIVSILKEKDEVFKKYYRNTMYAGSFYKQTRVGQPKEFDLNLILCLPDIDSVKIEKGRPGFAKIKFDERKISSVWTEHKVLNKWLDSEGYLDNGKLRGWFEGMVKKSLNPSEKNSNKFRIYSKDSSSPLCEAEIKKSGPAFTLIVNDGSMEFAVDLVPVLEFSQSPPLSNFEKLKEPWHLVPKPLKNGDVPNQNWRYCFYHYEKEMLKKNGKVKPIIRHIKKLRDTQNWSILASYYIETLFFHVLSKNDFDQNESQTRLLVYMLKELSKAFKSGLLNYFWDKTFNLFGELTEDQIVGVQNRLDKIIKEIEADPTTMTQYFLTKEEQKKLKEIEEKEKTQPKKEVNVDKTNGLSSTFPLIRETKSEKNKKIIQESENRETSKNEIKALKEMVLSLKAEFKDFKNSIKQKPIDQTPETEGTDEKEMKKLLLLLINEVKQLKLNVGRLETKIDQTNEQIKNIKSQSTFFDVMETGVPLLN</sequence>
<dbReference type="EC" id="2.7.7.86" evidence="3"/>
<dbReference type="EMBL" id="JANIEV010000006">
    <property type="status" value="NOT_ANNOTATED_CDS"/>
    <property type="molecule type" value="Genomic_DNA"/>
</dbReference>
<dbReference type="SMR" id="P0DXB6"/>
<dbReference type="EnsemblMetazoa" id="XM_008552322.3">
    <property type="protein sequence ID" value="XP_008550544.1"/>
    <property type="gene ID" value="LOC103573290"/>
</dbReference>
<dbReference type="EnsemblMetazoa" id="XM_008552331.3">
    <property type="protein sequence ID" value="XP_008550553.1"/>
    <property type="gene ID" value="LOC103573290"/>
</dbReference>
<dbReference type="KEGG" id="mdl:103573290"/>
<dbReference type="CTD" id="36744"/>
<dbReference type="GO" id="GO:0061501">
    <property type="term" value="F:2',3'-cyclic GMP-AMP synthase activity"/>
    <property type="evidence" value="ECO:0000314"/>
    <property type="project" value="UniProtKB"/>
</dbReference>
<dbReference type="GO" id="GO:0005524">
    <property type="term" value="F:ATP binding"/>
    <property type="evidence" value="ECO:0007669"/>
    <property type="project" value="UniProtKB-KW"/>
</dbReference>
<dbReference type="GO" id="GO:0003690">
    <property type="term" value="F:double-stranded DNA binding"/>
    <property type="evidence" value="ECO:0000314"/>
    <property type="project" value="UniProtKB"/>
</dbReference>
<dbReference type="GO" id="GO:0005525">
    <property type="term" value="F:GTP binding"/>
    <property type="evidence" value="ECO:0007669"/>
    <property type="project" value="UniProtKB-KW"/>
</dbReference>
<dbReference type="GO" id="GO:0046872">
    <property type="term" value="F:metal ion binding"/>
    <property type="evidence" value="ECO:0007669"/>
    <property type="project" value="UniProtKB-KW"/>
</dbReference>
<dbReference type="GO" id="GO:0003723">
    <property type="term" value="F:RNA binding"/>
    <property type="evidence" value="ECO:0007669"/>
    <property type="project" value="UniProtKB-KW"/>
</dbReference>
<dbReference type="GO" id="GO:0045087">
    <property type="term" value="P:innate immune response"/>
    <property type="evidence" value="ECO:0007669"/>
    <property type="project" value="UniProtKB-KW"/>
</dbReference>
<dbReference type="Gene3D" id="1.10.1410.40">
    <property type="match status" value="1"/>
</dbReference>
<dbReference type="Gene3D" id="3.30.460.90">
    <property type="match status" value="1"/>
</dbReference>
<dbReference type="InterPro" id="IPR046903">
    <property type="entry name" value="Mab-21-like_nuc_Trfase"/>
</dbReference>
<dbReference type="InterPro" id="IPR046906">
    <property type="entry name" value="Mab-21_HhH/H2TH-like"/>
</dbReference>
<dbReference type="InterPro" id="IPR024810">
    <property type="entry name" value="MAB21L/cGLR"/>
</dbReference>
<dbReference type="PANTHER" id="PTHR10656">
    <property type="entry name" value="CELL FATE DETERMINING PROTEIN MAB21-RELATED"/>
    <property type="match status" value="1"/>
</dbReference>
<dbReference type="PANTHER" id="PTHR10656:SF42">
    <property type="entry name" value="CYCLIC GMP-AMP SYNTHASE-LIKE PROTEIN-RELATED"/>
    <property type="match status" value="1"/>
</dbReference>
<dbReference type="Pfam" id="PF03281">
    <property type="entry name" value="Mab-21"/>
    <property type="match status" value="1"/>
</dbReference>
<dbReference type="Pfam" id="PF20266">
    <property type="entry name" value="Mab-21_C"/>
    <property type="match status" value="1"/>
</dbReference>
<dbReference type="SMART" id="SM01265">
    <property type="entry name" value="Mab-21"/>
    <property type="match status" value="1"/>
</dbReference>
<organism>
    <name type="scientific">Microplitis demolitor</name>
    <name type="common">Parasitoid wasp</name>
    <dbReference type="NCBI Taxonomy" id="69319"/>
    <lineage>
        <taxon>Eukaryota</taxon>
        <taxon>Metazoa</taxon>
        <taxon>Ecdysozoa</taxon>
        <taxon>Arthropoda</taxon>
        <taxon>Hexapoda</taxon>
        <taxon>Insecta</taxon>
        <taxon>Pterygota</taxon>
        <taxon>Neoptera</taxon>
        <taxon>Endopterygota</taxon>
        <taxon>Hymenoptera</taxon>
        <taxon>Apocrita</taxon>
        <taxon>Ichneumonoidea</taxon>
        <taxon>Braconidae</taxon>
        <taxon>Microgastrinae</taxon>
        <taxon>Microplitis</taxon>
    </lineage>
</organism>
<name>CGLR_MICDL</name>
<accession>P0DXB6</accession>
<proteinExistence type="evidence at protein level"/>
<protein>
    <recommendedName>
        <fullName evidence="5">Cyclic GMP-AMP synthase-like receptor</fullName>
        <shortName evidence="4">Md-cGLR</shortName>
        <ecNumber evidence="3">2.7.7.86</ecNumber>
    </recommendedName>
</protein>
<keyword id="KW-0067">ATP-binding</keyword>
<keyword id="KW-0342">GTP-binding</keyword>
<keyword id="KW-0391">Immunity</keyword>
<keyword id="KW-0399">Innate immunity</keyword>
<keyword id="KW-0460">Magnesium</keyword>
<keyword id="KW-0464">Manganese</keyword>
<keyword id="KW-0479">Metal-binding</keyword>
<keyword id="KW-0547">Nucleotide-binding</keyword>
<keyword id="KW-0548">Nucleotidyltransferase</keyword>
<keyword id="KW-0694">RNA-binding</keyword>
<keyword id="KW-0808">Transferase</keyword>
<gene>
    <name evidence="4" type="primary">cGLR</name>
</gene>
<comment type="function">
    <text evidence="3">Nucleotidyltransferase that catalyzes the formation of cyclic GMP-AMP (2',3'-cGAMP) from ATP and GTP and plays a key role in innate immunity (PubMed:37379839). Acts as a key sensor of double-stranded RNA (dsRNA), the presence of dsRNA in the cytoplasm being a danger signal that triggers the immune responses (PubMed:37379839). Directly binds dsRNA, activating the nucleotidyltransferase activity, leading to synthesis of 2',3'-cGAMP, a second messenger that binds to and activates Sting, thereby triggering the immune response via activation of the NF-kappa-B transcription factor (PubMed:37379839).</text>
</comment>
<comment type="catalytic activity">
    <reaction evidence="3">
        <text>GTP + ATP = 2',3'-cGAMP + 2 diphosphate</text>
        <dbReference type="Rhea" id="RHEA:42064"/>
        <dbReference type="ChEBI" id="CHEBI:30616"/>
        <dbReference type="ChEBI" id="CHEBI:33019"/>
        <dbReference type="ChEBI" id="CHEBI:37565"/>
        <dbReference type="ChEBI" id="CHEBI:143093"/>
        <dbReference type="EC" id="2.7.7.86"/>
    </reaction>
    <physiologicalReaction direction="left-to-right" evidence="3">
        <dbReference type="Rhea" id="RHEA:42065"/>
    </physiologicalReaction>
</comment>
<comment type="catalytic activity">
    <reaction evidence="3">
        <text>GTP + ATP = pppGp(2'-5')A + diphosphate</text>
        <dbReference type="Rhea" id="RHEA:23748"/>
        <dbReference type="ChEBI" id="CHEBI:30616"/>
        <dbReference type="ChEBI" id="CHEBI:33019"/>
        <dbReference type="ChEBI" id="CHEBI:37565"/>
        <dbReference type="ChEBI" id="CHEBI:78318"/>
    </reaction>
    <physiologicalReaction direction="left-to-right" evidence="3">
        <dbReference type="Rhea" id="RHEA:23749"/>
    </physiologicalReaction>
</comment>
<comment type="catalytic activity">
    <reaction evidence="3">
        <text>pppGp(2'-5')A = 2',3'-cGAMP + diphosphate</text>
        <dbReference type="Rhea" id="RHEA:23924"/>
        <dbReference type="ChEBI" id="CHEBI:33019"/>
        <dbReference type="ChEBI" id="CHEBI:78318"/>
        <dbReference type="ChEBI" id="CHEBI:143093"/>
    </reaction>
    <physiologicalReaction direction="left-to-right" evidence="3">
        <dbReference type="Rhea" id="RHEA:23925"/>
    </physiologicalReaction>
</comment>
<comment type="cofactor">
    <cofactor evidence="1">
        <name>Mg(2+)</name>
        <dbReference type="ChEBI" id="CHEBI:18420"/>
    </cofactor>
    <cofactor evidence="1">
        <name>Mn(2+)</name>
        <dbReference type="ChEBI" id="CHEBI:29035"/>
    </cofactor>
</comment>
<comment type="similarity">
    <text evidence="5">Belongs to the mab-21 family.</text>
</comment>
<reference key="1">
    <citation type="submission" date="2022-07" db="EMBL/GenBank/DDBJ databases">
        <title>Chromosome-length assembly of Microplitis demolitor.</title>
        <authorList>
            <person name="Burke G."/>
            <person name="Sim S.B."/>
            <person name="Simmonds T.J."/>
            <person name="Corpuz R.L."/>
            <person name="Duke M."/>
            <person name="Scheffler B."/>
            <person name="Geib S.M."/>
        </authorList>
    </citation>
    <scope>NUCLEOTIDE SEQUENCE [LARGE SCALE GENOMIC DNA]</scope>
</reference>
<reference key="2">
    <citation type="journal article" date="2023" name="Cell">
        <title>cGLRs are a diverse family of pattern recognition receptors in innate immunity.</title>
        <authorList>
            <person name="Li Y."/>
            <person name="Slavik K.M."/>
            <person name="Toyoda H.C."/>
            <person name="Morehouse B.R."/>
            <person name="de Oliveira Mann C.C."/>
            <person name="Elek A."/>
            <person name="Levy S."/>
            <person name="Wang Z."/>
            <person name="Mears K.S."/>
            <person name="Liu J."/>
            <person name="Kashin D."/>
            <person name="Guo X."/>
            <person name="Mass T."/>
            <person name="Sebe-Pedros A."/>
            <person name="Schwede F."/>
            <person name="Kranzusch P.J."/>
        </authorList>
    </citation>
    <scope>FUNCTION</scope>
    <scope>CATALYTIC ACTIVITY</scope>
</reference>
<evidence type="ECO:0000250" key="1">
    <source>
        <dbReference type="UniProtKB" id="D6WI29"/>
    </source>
</evidence>
<evidence type="ECO:0000250" key="2">
    <source>
        <dbReference type="UniProtKB" id="Q8N884"/>
    </source>
</evidence>
<evidence type="ECO:0000269" key="3">
    <source>
    </source>
</evidence>
<evidence type="ECO:0000303" key="4">
    <source>
    </source>
</evidence>
<evidence type="ECO:0000305" key="5"/>